<gene>
    <name type="primary">CCND2</name>
</gene>
<comment type="function">
    <text evidence="2">Regulatory component of the cyclin D2-CDK4 (DC) complex that phosphorylates and inhibits members of the retinoblastoma (RB) protein family including RB1 and regulates the cell-cycle during G(1)/S transition. Phosphorylation of RB1 allows dissociation of the transcription factor E2F from the RB/E2F complex and the subsequent transcription of E2F target genes which are responsible for the progression through the G(1) phase. Hypophosphorylates RB1 in early G(1) phase. Cyclin D-CDK4 complexes are major integrators of various mitogenenic and antimitogenic signals.</text>
</comment>
<comment type="subunit">
    <text evidence="2">Interacts with either CDK4 or CDK6 protein kinase to form a serine/threonine kinase holoenzyme complex. The cyclin subunit imparts substrate specificity to the complex.</text>
</comment>
<comment type="subcellular location">
    <subcellularLocation>
        <location evidence="2">Nucleus</location>
    </subcellularLocation>
    <subcellularLocation>
        <location evidence="2">Cytoplasm</location>
    </subcellularLocation>
    <subcellularLocation>
        <location evidence="2">Nucleus membrane</location>
    </subcellularLocation>
    <text evidence="2">Cyclin D-CDK4 complexes accumulate at the nuclear membrane and are then translocated into the nucleus through interaction with KIP/CIP family members.</text>
</comment>
<comment type="PTM">
    <text evidence="1">Phosphorylation at Thr-279 by MAP kinases is required for ubiquitination and degradation by the DCX(AMBRA1) complex.</text>
</comment>
<comment type="PTM">
    <text evidence="2 3">Ubiquitinated by the DCX(AMBRA1) complex during the transition from G1 to S cell phase, leading to its degradation: ubiquitination is dependent on Thr-279 phosphorylation. The DCX(AMBRA1) complex represents the major regulator of CCND2 stability during the G1/S transition (By similarity). Polyubiquitinated by the SCF(FBXL2) complex, leading to proteasomal degradation (By similarity).</text>
</comment>
<comment type="similarity">
    <text evidence="5">Belongs to the cyclin family. Cyclin D subfamily.</text>
</comment>
<name>CCND2_PIG</name>
<proteinExistence type="evidence at transcript level"/>
<keyword id="KW-0131">Cell cycle</keyword>
<keyword id="KW-0132">Cell division</keyword>
<keyword id="KW-0195">Cyclin</keyword>
<keyword id="KW-0963">Cytoplasm</keyword>
<keyword id="KW-0472">Membrane</keyword>
<keyword id="KW-0539">Nucleus</keyword>
<keyword id="KW-0597">Phosphoprotein</keyword>
<keyword id="KW-1185">Reference proteome</keyword>
<keyword id="KW-0832">Ubl conjugation</keyword>
<reference key="1">
    <citation type="submission" date="2000-07" db="EMBL/GenBank/DDBJ databases">
        <title>Transcriptional upregulation of p27Kip1 during contact-induced growth arrest in endotehlial cells.</title>
        <authorList>
            <person name="Hirano M."/>
            <person name="Hirano K."/>
            <person name="Nishimura J."/>
            <person name="Kanaide H."/>
        </authorList>
    </citation>
    <scope>NUCLEOTIDE SEQUENCE [MRNA]</scope>
</reference>
<dbReference type="EMBL" id="AB046174">
    <property type="protein sequence ID" value="BAB82986.1"/>
    <property type="molecule type" value="mRNA"/>
</dbReference>
<dbReference type="RefSeq" id="NP_999253.1">
    <property type="nucleotide sequence ID" value="NM_214088.1"/>
</dbReference>
<dbReference type="SMR" id="Q8WNW2"/>
<dbReference type="FunCoup" id="Q8WNW2">
    <property type="interactions" value="502"/>
</dbReference>
<dbReference type="STRING" id="9823.ENSSSCP00000053383"/>
<dbReference type="PaxDb" id="9823-ENSSSCP00000000774"/>
<dbReference type="Ensembl" id="ENSSSCT00000044116.2">
    <property type="protein sequence ID" value="ENSSSCP00000053383.1"/>
    <property type="gene ID" value="ENSSSCG00000038694.2"/>
</dbReference>
<dbReference type="Ensembl" id="ENSSSCT00015063769.1">
    <property type="protein sequence ID" value="ENSSSCP00015025534.1"/>
    <property type="gene ID" value="ENSSSCG00015047845.1"/>
</dbReference>
<dbReference type="Ensembl" id="ENSSSCT00025009320.1">
    <property type="protein sequence ID" value="ENSSSCP00025003687.1"/>
    <property type="gene ID" value="ENSSSCG00025007007.1"/>
</dbReference>
<dbReference type="Ensembl" id="ENSSSCT00030008126.1">
    <property type="protein sequence ID" value="ENSSSCP00030003566.1"/>
    <property type="gene ID" value="ENSSSCG00030006007.1"/>
</dbReference>
<dbReference type="Ensembl" id="ENSSSCT00040033570.1">
    <property type="protein sequence ID" value="ENSSSCP00040013835.1"/>
    <property type="gene ID" value="ENSSSCG00040025091.1"/>
</dbReference>
<dbReference type="Ensembl" id="ENSSSCT00045043756.1">
    <property type="protein sequence ID" value="ENSSSCP00045030384.1"/>
    <property type="gene ID" value="ENSSSCG00045025669.1"/>
</dbReference>
<dbReference type="Ensembl" id="ENSSSCT00055050824.1">
    <property type="protein sequence ID" value="ENSSSCP00055040638.1"/>
    <property type="gene ID" value="ENSSSCG00055025698.1"/>
</dbReference>
<dbReference type="Ensembl" id="ENSSSCT00060090963.1">
    <property type="protein sequence ID" value="ENSSSCP00060039337.1"/>
    <property type="gene ID" value="ENSSSCG00060066632.1"/>
</dbReference>
<dbReference type="Ensembl" id="ENSSSCT00065058996.1">
    <property type="protein sequence ID" value="ENSSSCP00065025582.1"/>
    <property type="gene ID" value="ENSSSCG00065043146.1"/>
</dbReference>
<dbReference type="Ensembl" id="ENSSSCT00070036675.1">
    <property type="protein sequence ID" value="ENSSSCP00070030664.1"/>
    <property type="gene ID" value="ENSSSCG00070018598.1"/>
</dbReference>
<dbReference type="Ensembl" id="ENSSSCT00085023417">
    <property type="protein sequence ID" value="ENSSSCP00085016056"/>
    <property type="gene ID" value="ENSSSCG00085012486"/>
</dbReference>
<dbReference type="Ensembl" id="ENSSSCT00090041680">
    <property type="protein sequence ID" value="ENSSSCP00090025821"/>
    <property type="gene ID" value="ENSSSCG00090023570"/>
</dbReference>
<dbReference type="Ensembl" id="ENSSSCT00105020912">
    <property type="protein sequence ID" value="ENSSSCP00105015076"/>
    <property type="gene ID" value="ENSSSCG00105010453"/>
</dbReference>
<dbReference type="Ensembl" id="ENSSSCT00110049649">
    <property type="protein sequence ID" value="ENSSSCP00110034922"/>
    <property type="gene ID" value="ENSSSCG00110025769"/>
</dbReference>
<dbReference type="Ensembl" id="ENSSSCT00115026400">
    <property type="protein sequence ID" value="ENSSSCP00115025018"/>
    <property type="gene ID" value="ENSSSCG00115015179"/>
</dbReference>
<dbReference type="GeneID" id="397162"/>
<dbReference type="KEGG" id="ssc:397162"/>
<dbReference type="CTD" id="894"/>
<dbReference type="VGNC" id="VGNC:103222">
    <property type="gene designation" value="CCND2"/>
</dbReference>
<dbReference type="eggNOG" id="KOG0656">
    <property type="taxonomic scope" value="Eukaryota"/>
</dbReference>
<dbReference type="GeneTree" id="ENSGT00940000155180"/>
<dbReference type="HOGENOM" id="CLU_052190_2_1_1"/>
<dbReference type="InParanoid" id="Q8WNW2"/>
<dbReference type="OMA" id="CLEMDTN"/>
<dbReference type="OrthoDB" id="306099at2759"/>
<dbReference type="Reactome" id="R-SSC-69231">
    <property type="pathway name" value="Cyclin D associated events in G1"/>
</dbReference>
<dbReference type="Reactome" id="R-SSC-8934593">
    <property type="pathway name" value="Regulation of RUNX1 Expression and Activity"/>
</dbReference>
<dbReference type="Reactome" id="R-SSC-9754119">
    <property type="pathway name" value="Drug-mediated inhibition of CDK4/CDK6 activity"/>
</dbReference>
<dbReference type="Proteomes" id="UP000008227">
    <property type="component" value="Chromosome 5"/>
</dbReference>
<dbReference type="Proteomes" id="UP000314985">
    <property type="component" value="Chromosome 5"/>
</dbReference>
<dbReference type="Proteomes" id="UP000694570">
    <property type="component" value="Unplaced"/>
</dbReference>
<dbReference type="Proteomes" id="UP000694571">
    <property type="component" value="Unplaced"/>
</dbReference>
<dbReference type="Proteomes" id="UP000694720">
    <property type="component" value="Unplaced"/>
</dbReference>
<dbReference type="Proteomes" id="UP000694722">
    <property type="component" value="Unplaced"/>
</dbReference>
<dbReference type="Proteomes" id="UP000694723">
    <property type="component" value="Unplaced"/>
</dbReference>
<dbReference type="Proteomes" id="UP000694724">
    <property type="component" value="Unplaced"/>
</dbReference>
<dbReference type="Proteomes" id="UP000694725">
    <property type="component" value="Unplaced"/>
</dbReference>
<dbReference type="Proteomes" id="UP000694726">
    <property type="component" value="Unplaced"/>
</dbReference>
<dbReference type="Proteomes" id="UP000694727">
    <property type="component" value="Unplaced"/>
</dbReference>
<dbReference type="Proteomes" id="UP000694728">
    <property type="component" value="Unplaced"/>
</dbReference>
<dbReference type="Bgee" id="ENSSSCG00000038694">
    <property type="expression patterns" value="Expressed in stomach and 41 other cell types or tissues"/>
</dbReference>
<dbReference type="GO" id="GO:0000785">
    <property type="term" value="C:chromatin"/>
    <property type="evidence" value="ECO:0007669"/>
    <property type="project" value="Ensembl"/>
</dbReference>
<dbReference type="GO" id="GO:0097129">
    <property type="term" value="C:cyclin D2-CDK4 complex"/>
    <property type="evidence" value="ECO:0007669"/>
    <property type="project" value="Ensembl"/>
</dbReference>
<dbReference type="GO" id="GO:0000307">
    <property type="term" value="C:cyclin-dependent protein kinase holoenzyme complex"/>
    <property type="evidence" value="ECO:0000318"/>
    <property type="project" value="GO_Central"/>
</dbReference>
<dbReference type="GO" id="GO:0005737">
    <property type="term" value="C:cytoplasm"/>
    <property type="evidence" value="ECO:0000318"/>
    <property type="project" value="GO_Central"/>
</dbReference>
<dbReference type="GO" id="GO:0005829">
    <property type="term" value="C:cytosol"/>
    <property type="evidence" value="ECO:0007669"/>
    <property type="project" value="Ensembl"/>
</dbReference>
<dbReference type="GO" id="GO:0005815">
    <property type="term" value="C:microtubule organizing center"/>
    <property type="evidence" value="ECO:0000318"/>
    <property type="project" value="GO_Central"/>
</dbReference>
<dbReference type="GO" id="GO:0031965">
    <property type="term" value="C:nuclear membrane"/>
    <property type="evidence" value="ECO:0007669"/>
    <property type="project" value="UniProtKB-SubCell"/>
</dbReference>
<dbReference type="GO" id="GO:0005730">
    <property type="term" value="C:nucleolus"/>
    <property type="evidence" value="ECO:0007669"/>
    <property type="project" value="Ensembl"/>
</dbReference>
<dbReference type="GO" id="GO:0005654">
    <property type="term" value="C:nucleoplasm"/>
    <property type="evidence" value="ECO:0007669"/>
    <property type="project" value="Ensembl"/>
</dbReference>
<dbReference type="GO" id="GO:0005634">
    <property type="term" value="C:nucleus"/>
    <property type="evidence" value="ECO:0000318"/>
    <property type="project" value="GO_Central"/>
</dbReference>
<dbReference type="GO" id="GO:0061575">
    <property type="term" value="F:cyclin-dependent protein serine/threonine kinase activator activity"/>
    <property type="evidence" value="ECO:0007669"/>
    <property type="project" value="Ensembl"/>
</dbReference>
<dbReference type="GO" id="GO:0016538">
    <property type="term" value="F:cyclin-dependent protein serine/threonine kinase regulator activity"/>
    <property type="evidence" value="ECO:0000318"/>
    <property type="project" value="GO_Central"/>
</dbReference>
<dbReference type="GO" id="GO:0019901">
    <property type="term" value="F:protein kinase binding"/>
    <property type="evidence" value="ECO:0007669"/>
    <property type="project" value="Ensembl"/>
</dbReference>
<dbReference type="GO" id="GO:0008344">
    <property type="term" value="P:adult locomotory behavior"/>
    <property type="evidence" value="ECO:0007669"/>
    <property type="project" value="Ensembl"/>
</dbReference>
<dbReference type="GO" id="GO:0051301">
    <property type="term" value="P:cell division"/>
    <property type="evidence" value="ECO:0007669"/>
    <property type="project" value="UniProtKB-KW"/>
</dbReference>
<dbReference type="GO" id="GO:0071481">
    <property type="term" value="P:cellular response to X-ray"/>
    <property type="evidence" value="ECO:0007669"/>
    <property type="project" value="Ensembl"/>
</dbReference>
<dbReference type="GO" id="GO:0000082">
    <property type="term" value="P:G1/S transition of mitotic cell cycle"/>
    <property type="evidence" value="ECO:0000318"/>
    <property type="project" value="GO_Central"/>
</dbReference>
<dbReference type="GO" id="GO:0007616">
    <property type="term" value="P:long-term memory"/>
    <property type="evidence" value="ECO:0007669"/>
    <property type="project" value="Ensembl"/>
</dbReference>
<dbReference type="GO" id="GO:0043066">
    <property type="term" value="P:negative regulation of apoptotic process"/>
    <property type="evidence" value="ECO:0007669"/>
    <property type="project" value="Ensembl"/>
</dbReference>
<dbReference type="GO" id="GO:0008284">
    <property type="term" value="P:positive regulation of cell population proliferation"/>
    <property type="evidence" value="ECO:0007669"/>
    <property type="project" value="Ensembl"/>
</dbReference>
<dbReference type="GO" id="GO:1900087">
    <property type="term" value="P:positive regulation of G1/S transition of mitotic cell cycle"/>
    <property type="evidence" value="ECO:0000318"/>
    <property type="project" value="GO_Central"/>
</dbReference>
<dbReference type="CDD" id="cd20574">
    <property type="entry name" value="CYCLIN_CCND2_rpt1"/>
    <property type="match status" value="1"/>
</dbReference>
<dbReference type="CDD" id="cd20577">
    <property type="entry name" value="CYCLIN_CCND2_rpt2"/>
    <property type="match status" value="1"/>
</dbReference>
<dbReference type="FunFam" id="1.10.472.10:FF:000012">
    <property type="entry name" value="G1/S-specific cyclin-D1"/>
    <property type="match status" value="1"/>
</dbReference>
<dbReference type="FunFam" id="1.10.472.10:FF:000120">
    <property type="entry name" value="G1/S-specific cyclin-D1"/>
    <property type="match status" value="1"/>
</dbReference>
<dbReference type="Gene3D" id="1.10.472.10">
    <property type="entry name" value="Cyclin-like"/>
    <property type="match status" value="2"/>
</dbReference>
<dbReference type="InterPro" id="IPR039361">
    <property type="entry name" value="Cyclin"/>
</dbReference>
<dbReference type="InterPro" id="IPR013763">
    <property type="entry name" value="Cyclin-like_dom"/>
</dbReference>
<dbReference type="InterPro" id="IPR036915">
    <property type="entry name" value="Cyclin-like_sf"/>
</dbReference>
<dbReference type="InterPro" id="IPR004367">
    <property type="entry name" value="Cyclin_C-dom"/>
</dbReference>
<dbReference type="InterPro" id="IPR006671">
    <property type="entry name" value="Cyclin_N"/>
</dbReference>
<dbReference type="InterPro" id="IPR048258">
    <property type="entry name" value="Cyclins_cyclin-box"/>
</dbReference>
<dbReference type="PANTHER" id="PTHR10177">
    <property type="entry name" value="CYCLINS"/>
    <property type="match status" value="1"/>
</dbReference>
<dbReference type="Pfam" id="PF02984">
    <property type="entry name" value="Cyclin_C"/>
    <property type="match status" value="1"/>
</dbReference>
<dbReference type="Pfam" id="PF00134">
    <property type="entry name" value="Cyclin_N"/>
    <property type="match status" value="1"/>
</dbReference>
<dbReference type="SMART" id="SM00385">
    <property type="entry name" value="CYCLIN"/>
    <property type="match status" value="1"/>
</dbReference>
<dbReference type="SMART" id="SM01332">
    <property type="entry name" value="Cyclin_C"/>
    <property type="match status" value="1"/>
</dbReference>
<dbReference type="SUPFAM" id="SSF47954">
    <property type="entry name" value="Cyclin-like"/>
    <property type="match status" value="2"/>
</dbReference>
<dbReference type="PROSITE" id="PS00292">
    <property type="entry name" value="CYCLINS"/>
    <property type="match status" value="1"/>
</dbReference>
<accession>Q8WNW2</accession>
<sequence length="288" mass="32643">MELLCCEVDPVRRAVPDANLLHDDRVLQNLLTIEERYLPQCSYFKCVQKDIQPYMRRMVATWMLEVCEEQKCEEEVFPLAINYLDRFLAGVPTPKTHLQLLGAVCMFLASKLKETIPLTAEKLCIYTDNSIKPQELLEWELVVLGKLKWNLAAVTPHDFIEHILRKLPQPNEKLSLIRKHAQTFIALCATDFKFAMYPPSMIATGSVGAAICGLQQDEDVSSLTGDALVDLLARITNTDVDCLKACQEQIEVVLLNSLQQYRQDQDGSKSEDELDQASTPTDVRDIDL</sequence>
<protein>
    <recommendedName>
        <fullName>G1/S-specific cyclin-D2</fullName>
    </recommendedName>
</protein>
<feature type="chain" id="PRO_0000290191" description="G1/S-specific cyclin-D2">
    <location>
        <begin position="1"/>
        <end position="288"/>
    </location>
</feature>
<feature type="domain" description="Cyclin N-terminal">
    <location>
        <begin position="26"/>
        <end position="151"/>
    </location>
</feature>
<feature type="region of interest" description="Disordered" evidence="4">
    <location>
        <begin position="264"/>
        <end position="288"/>
    </location>
</feature>
<feature type="modified residue" description="Phosphoserine" evidence="2">
    <location>
        <position position="270"/>
    </location>
</feature>
<feature type="modified residue" description="Phosphothreonine" evidence="3">
    <location>
        <position position="279"/>
    </location>
</feature>
<organism>
    <name type="scientific">Sus scrofa</name>
    <name type="common">Pig</name>
    <dbReference type="NCBI Taxonomy" id="9823"/>
    <lineage>
        <taxon>Eukaryota</taxon>
        <taxon>Metazoa</taxon>
        <taxon>Chordata</taxon>
        <taxon>Craniata</taxon>
        <taxon>Vertebrata</taxon>
        <taxon>Euteleostomi</taxon>
        <taxon>Mammalia</taxon>
        <taxon>Eutheria</taxon>
        <taxon>Laurasiatheria</taxon>
        <taxon>Artiodactyla</taxon>
        <taxon>Suina</taxon>
        <taxon>Suidae</taxon>
        <taxon>Sus</taxon>
    </lineage>
</organism>
<evidence type="ECO:0000250" key="1">
    <source>
        <dbReference type="UniProtKB" id="P24385"/>
    </source>
</evidence>
<evidence type="ECO:0000250" key="2">
    <source>
        <dbReference type="UniProtKB" id="P30279"/>
    </source>
</evidence>
<evidence type="ECO:0000250" key="3">
    <source>
        <dbReference type="UniProtKB" id="P30280"/>
    </source>
</evidence>
<evidence type="ECO:0000256" key="4">
    <source>
        <dbReference type="SAM" id="MobiDB-lite"/>
    </source>
</evidence>
<evidence type="ECO:0000305" key="5"/>